<proteinExistence type="inferred from homology"/>
<reference key="1">
    <citation type="journal article" date="1998" name="Science">
        <title>Genome sequence of the nematode C. elegans: a platform for investigating biology.</title>
        <authorList>
            <consortium name="The C. elegans sequencing consortium"/>
        </authorList>
    </citation>
    <scope>NUCLEOTIDE SEQUENCE [LARGE SCALE GENOMIC DNA]</scope>
    <source>
        <strain>Bristol N2</strain>
    </source>
</reference>
<reference key="2">
    <citation type="journal article" date="2017" name="Chem. Sci.">
        <title>Structure and conserved function of iso-branched sphingoid bases from the nematode Caenorhabditis elegans.</title>
        <authorList>
            <person name="Hannich J.T."/>
            <person name="Mellal D."/>
            <person name="Feng S."/>
            <person name="Zumbuehl A."/>
            <person name="Riezman H."/>
        </authorList>
    </citation>
    <scope>FUNCTION</scope>
</reference>
<protein>
    <recommendedName>
        <fullName>Putative glucosylceramidase 4</fullName>
        <ecNumber>3.2.1.45</ecNumber>
    </recommendedName>
</protein>
<organism>
    <name type="scientific">Caenorhabditis elegans</name>
    <dbReference type="NCBI Taxonomy" id="6239"/>
    <lineage>
        <taxon>Eukaryota</taxon>
        <taxon>Metazoa</taxon>
        <taxon>Ecdysozoa</taxon>
        <taxon>Nematoda</taxon>
        <taxon>Chromadorea</taxon>
        <taxon>Rhabditida</taxon>
        <taxon>Rhabditina</taxon>
        <taxon>Rhabditomorpha</taxon>
        <taxon>Rhabditoidea</taxon>
        <taxon>Rhabditidae</taxon>
        <taxon>Peloderinae</taxon>
        <taxon>Caenorhabditis</taxon>
    </lineage>
</organism>
<dbReference type="EC" id="3.2.1.45"/>
<dbReference type="EMBL" id="FO081369">
    <property type="protein sequence ID" value="CCD71128.1"/>
    <property type="molecule type" value="Genomic_DNA"/>
</dbReference>
<dbReference type="PIR" id="T34017">
    <property type="entry name" value="T34017"/>
</dbReference>
<dbReference type="RefSeq" id="NP_500785.1">
    <property type="nucleotide sequence ID" value="NM_068384.6"/>
</dbReference>
<dbReference type="SMR" id="Q9UB00"/>
<dbReference type="BioGRID" id="42437">
    <property type="interactions" value="9"/>
</dbReference>
<dbReference type="FunCoup" id="Q9UB00">
    <property type="interactions" value="639"/>
</dbReference>
<dbReference type="STRING" id="6239.Y4C6B.6.1"/>
<dbReference type="CAZy" id="GH30">
    <property type="family name" value="Glycoside Hydrolase Family 30"/>
</dbReference>
<dbReference type="PaxDb" id="6239-Y4C6B.6"/>
<dbReference type="PeptideAtlas" id="Q9UB00"/>
<dbReference type="EnsemblMetazoa" id="Y4C6B.6.1">
    <property type="protein sequence ID" value="Y4C6B.6.1"/>
    <property type="gene ID" value="WBGene00021160"/>
</dbReference>
<dbReference type="GeneID" id="177314"/>
<dbReference type="KEGG" id="cel:CELE_Y4C6B.6"/>
<dbReference type="UCSC" id="Y4C6B.6">
    <property type="organism name" value="c. elegans"/>
</dbReference>
<dbReference type="AGR" id="WB:WBGene00021160"/>
<dbReference type="CTD" id="177314"/>
<dbReference type="WormBase" id="Y4C6B.6">
    <property type="protein sequence ID" value="CE28522"/>
    <property type="gene ID" value="WBGene00021160"/>
    <property type="gene designation" value="gba-4"/>
</dbReference>
<dbReference type="eggNOG" id="KOG2566">
    <property type="taxonomic scope" value="Eukaryota"/>
</dbReference>
<dbReference type="GeneTree" id="ENSGT00390000009464"/>
<dbReference type="HOGENOM" id="CLU_014379_1_2_1"/>
<dbReference type="InParanoid" id="Q9UB00"/>
<dbReference type="OMA" id="GLMWNFA"/>
<dbReference type="OrthoDB" id="2160638at2759"/>
<dbReference type="PhylomeDB" id="Q9UB00"/>
<dbReference type="Reactome" id="R-CEL-9840310">
    <property type="pathway name" value="Glycosphingolipid catabolism"/>
</dbReference>
<dbReference type="UniPathway" id="UPA00222"/>
<dbReference type="PRO" id="PR:Q9UB00"/>
<dbReference type="Proteomes" id="UP000001940">
    <property type="component" value="Chromosome IV"/>
</dbReference>
<dbReference type="Bgee" id="WBGene00021160">
    <property type="expression patterns" value="Expressed in adult organism and 2 other cell types or tissues"/>
</dbReference>
<dbReference type="GO" id="GO:0016020">
    <property type="term" value="C:membrane"/>
    <property type="evidence" value="ECO:0007669"/>
    <property type="project" value="GOC"/>
</dbReference>
<dbReference type="GO" id="GO:0004348">
    <property type="term" value="F:glucosylceramidase activity"/>
    <property type="evidence" value="ECO:0000318"/>
    <property type="project" value="GO_Central"/>
</dbReference>
<dbReference type="GO" id="GO:0006680">
    <property type="term" value="P:glucosylceramide catabolic process"/>
    <property type="evidence" value="ECO:0000318"/>
    <property type="project" value="GO_Central"/>
</dbReference>
<dbReference type="FunFam" id="3.20.20.80:FF:000030">
    <property type="entry name" value="Lysosomal acid glucosylceramidase"/>
    <property type="match status" value="1"/>
</dbReference>
<dbReference type="Gene3D" id="3.20.20.80">
    <property type="entry name" value="Glycosidases"/>
    <property type="match status" value="1"/>
</dbReference>
<dbReference type="InterPro" id="IPR033452">
    <property type="entry name" value="GH30_C"/>
</dbReference>
<dbReference type="InterPro" id="IPR001139">
    <property type="entry name" value="Glyco_hydro_30"/>
</dbReference>
<dbReference type="InterPro" id="IPR033453">
    <property type="entry name" value="Glyco_hydro_30_TIM-barrel"/>
</dbReference>
<dbReference type="InterPro" id="IPR017853">
    <property type="entry name" value="Glycoside_hydrolase_SF"/>
</dbReference>
<dbReference type="PANTHER" id="PTHR11069">
    <property type="entry name" value="GLUCOSYLCERAMIDASE"/>
    <property type="match status" value="1"/>
</dbReference>
<dbReference type="PANTHER" id="PTHR11069:SF42">
    <property type="entry name" value="GLUCOSYLCERAMIDASE 4-RELATED"/>
    <property type="match status" value="1"/>
</dbReference>
<dbReference type="Pfam" id="PF02055">
    <property type="entry name" value="Glyco_hydro_30"/>
    <property type="match status" value="1"/>
</dbReference>
<dbReference type="Pfam" id="PF17189">
    <property type="entry name" value="Glyco_hydro_30C"/>
    <property type="match status" value="1"/>
</dbReference>
<dbReference type="PRINTS" id="PR00843">
    <property type="entry name" value="GLHYDRLASE30"/>
</dbReference>
<dbReference type="SUPFAM" id="SSF51445">
    <property type="entry name" value="(Trans)glycosidases"/>
    <property type="match status" value="1"/>
</dbReference>
<dbReference type="SUPFAM" id="SSF51011">
    <property type="entry name" value="Glycosyl hydrolase domain"/>
    <property type="match status" value="1"/>
</dbReference>
<feature type="signal peptide" evidence="3">
    <location>
        <begin position="1"/>
        <end position="24"/>
    </location>
</feature>
<feature type="chain" id="PRO_0000421456" description="Putative glucosylceramidase 4">
    <location>
        <begin position="25"/>
        <end position="519"/>
    </location>
</feature>
<feature type="active site" description="Proton donor" evidence="1">
    <location>
        <position position="256"/>
    </location>
</feature>
<feature type="active site" description="Nucleophile" evidence="1">
    <location>
        <position position="361"/>
    </location>
</feature>
<gene>
    <name type="primary">gba-4</name>
    <name type="ORF">Y4C6B.6</name>
</gene>
<keyword id="KW-0378">Hydrolase</keyword>
<keyword id="KW-0443">Lipid metabolism</keyword>
<keyword id="KW-1185">Reference proteome</keyword>
<keyword id="KW-0732">Signal</keyword>
<keyword id="KW-0746">Sphingolipid metabolism</keyword>
<sequence>MILNISVSLLIFLAFYGFSSDAKSLPCSEVKKEYGIVCRCNATYCDTIEPLGTVTSGKAVVYTTSRNGKRMNRSELKHTTSSTAKTKVYVNTTQSFQPVMGFGAAFTDAAGINMKMLPQTMQDQIIQQYFSDDGLGYVFGRVPMASTDFSTHEYSYDDVKFDFDLKNFNLTVEDLQYKIPFIKKAMTASGGKLKLFATPWSSPGWMKTSGRMVGAGELLGDQNGKYYQTWAQYFVKFFEAYHAQGIDFWSLTPQNEPTTGIDPLWKWQTLFFDASMERNFIKKLLGPALASSPVTKNLKIMINDDQRINLPHWPNVILTDPTAAQYVHGIAIHWYEDFIDPATVLTETHEKFPDYFLLATEACAGYFPADGPKLGSWSRAEQYANDLIKDMGNWVGGWVDWNYILDLQGGPNLAKNFVDSTIIVNATAQEYYKQPIWHVMAQFSKFVKPGAIRVGINIIEKSVDVEGLSFLNQDGTKTVVLLNKNEVLSFDVAISDVSAPNVIYDLTIQPNSLITIVYK</sequence>
<accession>Q9UB00</accession>
<name>GLCM4_CAEEL</name>
<comment type="function">
    <text evidence="2 4">Glucosylceramidase that catalyzes the hydrolysis of glucosylceramides into free ceramides and glucose (By similarity). C.elegans contains specific sphingoid bases, which are unique or different in structure compared to the sphingoid bases found in other animals. Two examples of these distinctive compounds are: 15-methylhexadecasphinganine and 15-methylhexadecasphing-4-enine (PubMed:30155209).</text>
</comment>
<comment type="catalytic activity">
    <reaction evidence="5">
        <text>a beta-D-glucosylceramide + H2O = an N-acyl-sphingoid base + D-glucose</text>
        <dbReference type="Rhea" id="RHEA:81447"/>
        <dbReference type="ChEBI" id="CHEBI:4167"/>
        <dbReference type="ChEBI" id="CHEBI:15377"/>
        <dbReference type="ChEBI" id="CHEBI:83264"/>
        <dbReference type="ChEBI" id="CHEBI:83273"/>
    </reaction>
    <physiologicalReaction direction="left-to-right" evidence="5">
        <dbReference type="Rhea" id="RHEA:81448"/>
    </physiologicalReaction>
</comment>
<comment type="catalytic activity">
    <reaction>
        <text>a beta-D-glucosyl-(1&lt;-&gt;1')-N-acylsphing-4-enine + H2O = an N-acylsphing-4-enine + D-glucose</text>
        <dbReference type="Rhea" id="RHEA:13269"/>
        <dbReference type="ChEBI" id="CHEBI:4167"/>
        <dbReference type="ChEBI" id="CHEBI:15377"/>
        <dbReference type="ChEBI" id="CHEBI:22801"/>
        <dbReference type="ChEBI" id="CHEBI:52639"/>
        <dbReference type="EC" id="3.2.1.45"/>
    </reaction>
    <physiologicalReaction direction="left-to-right" evidence="5">
        <dbReference type="Rhea" id="RHEA:13270"/>
    </physiologicalReaction>
</comment>
<comment type="catalytic activity">
    <reaction evidence="5">
        <text>an N-acyl-1-beta-D-glucosyl-15-methylhexadecasphing-4-enine + H2O = an N-acyl-15-methylhexadecasphing-4-enine + D-glucose</text>
        <dbReference type="Rhea" id="RHEA:34755"/>
        <dbReference type="ChEBI" id="CHEBI:4167"/>
        <dbReference type="ChEBI" id="CHEBI:15377"/>
        <dbReference type="ChEBI" id="CHEBI:70815"/>
        <dbReference type="ChEBI" id="CHEBI:70846"/>
    </reaction>
    <physiologicalReaction direction="left-to-right" evidence="5">
        <dbReference type="Rhea" id="RHEA:34756"/>
    </physiologicalReaction>
</comment>
<comment type="pathway">
    <text>Lipid metabolism; sphingolipid metabolism.</text>
</comment>
<comment type="similarity">
    <text evidence="5">Belongs to the glycosyl hydrolase 30 family.</text>
</comment>
<evidence type="ECO:0000250" key="1"/>
<evidence type="ECO:0000250" key="2">
    <source>
        <dbReference type="UniProtKB" id="P17439"/>
    </source>
</evidence>
<evidence type="ECO:0000255" key="3"/>
<evidence type="ECO:0000269" key="4">
    <source>
    </source>
</evidence>
<evidence type="ECO:0000305" key="5"/>